<comment type="function">
    <text evidence="1">Catalyzes the transfer of the phosphoribosyl group of 5-phosphorylribose-1-pyrophosphate (PRPP) to anthranilate to yield N-(5'-phosphoribosyl)-anthranilate (PRA).</text>
</comment>
<comment type="catalytic activity">
    <reaction evidence="1">
        <text>N-(5-phospho-beta-D-ribosyl)anthranilate + diphosphate = 5-phospho-alpha-D-ribose 1-diphosphate + anthranilate</text>
        <dbReference type="Rhea" id="RHEA:11768"/>
        <dbReference type="ChEBI" id="CHEBI:16567"/>
        <dbReference type="ChEBI" id="CHEBI:18277"/>
        <dbReference type="ChEBI" id="CHEBI:33019"/>
        <dbReference type="ChEBI" id="CHEBI:58017"/>
        <dbReference type="EC" id="2.4.2.18"/>
    </reaction>
</comment>
<comment type="cofactor">
    <cofactor evidence="1">
        <name>Mg(2+)</name>
        <dbReference type="ChEBI" id="CHEBI:18420"/>
    </cofactor>
    <text evidence="1">Binds 2 magnesium ions per monomer.</text>
</comment>
<comment type="pathway">
    <text evidence="1">Amino-acid biosynthesis; L-tryptophan biosynthesis; L-tryptophan from chorismate: step 2/5.</text>
</comment>
<comment type="subunit">
    <text evidence="1">Homodimer.</text>
</comment>
<comment type="similarity">
    <text evidence="1">Belongs to the anthranilate phosphoribosyltransferase family.</text>
</comment>
<protein>
    <recommendedName>
        <fullName evidence="1">Anthranilate phosphoribosyltransferase</fullName>
        <ecNumber evidence="1">2.4.2.18</ecNumber>
    </recommendedName>
</protein>
<keyword id="KW-0028">Amino-acid biosynthesis</keyword>
<keyword id="KW-0057">Aromatic amino acid biosynthesis</keyword>
<keyword id="KW-0328">Glycosyltransferase</keyword>
<keyword id="KW-0460">Magnesium</keyword>
<keyword id="KW-0479">Metal-binding</keyword>
<keyword id="KW-0808">Transferase</keyword>
<keyword id="KW-0822">Tryptophan biosynthesis</keyword>
<sequence>MTPITPQEALQRTIEHREIFHDEMLHLMRMIMSGELSPVMTAAITTGLRVKKETIGEITAAAQVMREFSHKVQVHDTKHLVDIVGTGGDGANTFNISTCATFVIAAAGAKVSKHGGRSVSSKSGSADAMEALGVHINLQPAQIAQCIGDVGIGFMFAPNHHPAMKNVAPVRKELGVRTIFNILGPLTNPAGAPNILMGVFHEDLVGIQVRALQRLGAEHALVVYGRDGLDEISLGAGTLVGELKDGAVREYEIHPEDFGLRMAGTRALRVENPTESKAMLMGVLQGDEGPARDIVCLNAGAALYAANVADSLEDGLRRAQQALASGAALAKLQQLVAYTQKLAA</sequence>
<proteinExistence type="inferred from homology"/>
<evidence type="ECO:0000255" key="1">
    <source>
        <dbReference type="HAMAP-Rule" id="MF_00211"/>
    </source>
</evidence>
<reference key="1">
    <citation type="submission" date="2006-12" db="EMBL/GenBank/DDBJ databases">
        <title>Complete sequence of chromosome 1 of Acidovorax sp. JS42.</title>
        <authorList>
            <person name="Copeland A."/>
            <person name="Lucas S."/>
            <person name="Lapidus A."/>
            <person name="Barry K."/>
            <person name="Detter J.C."/>
            <person name="Glavina del Rio T."/>
            <person name="Dalin E."/>
            <person name="Tice H."/>
            <person name="Pitluck S."/>
            <person name="Chertkov O."/>
            <person name="Brettin T."/>
            <person name="Bruce D."/>
            <person name="Han C."/>
            <person name="Tapia R."/>
            <person name="Gilna P."/>
            <person name="Schmutz J."/>
            <person name="Larimer F."/>
            <person name="Land M."/>
            <person name="Hauser L."/>
            <person name="Kyrpides N."/>
            <person name="Kim E."/>
            <person name="Stahl D."/>
            <person name="Richardson P."/>
        </authorList>
    </citation>
    <scope>NUCLEOTIDE SEQUENCE [LARGE SCALE GENOMIC DNA]</scope>
    <source>
        <strain>JS42</strain>
    </source>
</reference>
<name>TRPD_ACISJ</name>
<organism>
    <name type="scientific">Acidovorax sp. (strain JS42)</name>
    <dbReference type="NCBI Taxonomy" id="232721"/>
    <lineage>
        <taxon>Bacteria</taxon>
        <taxon>Pseudomonadati</taxon>
        <taxon>Pseudomonadota</taxon>
        <taxon>Betaproteobacteria</taxon>
        <taxon>Burkholderiales</taxon>
        <taxon>Comamonadaceae</taxon>
        <taxon>Acidovorax</taxon>
    </lineage>
</organism>
<feature type="chain" id="PRO_0000325410" description="Anthranilate phosphoribosyltransferase">
    <location>
        <begin position="1"/>
        <end position="344"/>
    </location>
</feature>
<feature type="binding site" evidence="1">
    <location>
        <position position="85"/>
    </location>
    <ligand>
        <name>5-phospho-alpha-D-ribose 1-diphosphate</name>
        <dbReference type="ChEBI" id="CHEBI:58017"/>
    </ligand>
</feature>
<feature type="binding site" evidence="1">
    <location>
        <position position="85"/>
    </location>
    <ligand>
        <name>anthranilate</name>
        <dbReference type="ChEBI" id="CHEBI:16567"/>
        <label>1</label>
    </ligand>
</feature>
<feature type="binding site" evidence="1">
    <location>
        <begin position="88"/>
        <end position="89"/>
    </location>
    <ligand>
        <name>5-phospho-alpha-D-ribose 1-diphosphate</name>
        <dbReference type="ChEBI" id="CHEBI:58017"/>
    </ligand>
</feature>
<feature type="binding site" evidence="1">
    <location>
        <position position="93"/>
    </location>
    <ligand>
        <name>5-phospho-alpha-D-ribose 1-diphosphate</name>
        <dbReference type="ChEBI" id="CHEBI:58017"/>
    </ligand>
</feature>
<feature type="binding site" evidence="1">
    <location>
        <begin position="95"/>
        <end position="98"/>
    </location>
    <ligand>
        <name>5-phospho-alpha-D-ribose 1-diphosphate</name>
        <dbReference type="ChEBI" id="CHEBI:58017"/>
    </ligand>
</feature>
<feature type="binding site" evidence="1">
    <location>
        <position position="97"/>
    </location>
    <ligand>
        <name>Mg(2+)</name>
        <dbReference type="ChEBI" id="CHEBI:18420"/>
        <label>1</label>
    </ligand>
</feature>
<feature type="binding site" evidence="1">
    <location>
        <begin position="113"/>
        <end position="121"/>
    </location>
    <ligand>
        <name>5-phospho-alpha-D-ribose 1-diphosphate</name>
        <dbReference type="ChEBI" id="CHEBI:58017"/>
    </ligand>
</feature>
<feature type="binding site" evidence="1">
    <location>
        <position position="125"/>
    </location>
    <ligand>
        <name>5-phospho-alpha-D-ribose 1-diphosphate</name>
        <dbReference type="ChEBI" id="CHEBI:58017"/>
    </ligand>
</feature>
<feature type="binding site" evidence="1">
    <location>
        <position position="171"/>
    </location>
    <ligand>
        <name>anthranilate</name>
        <dbReference type="ChEBI" id="CHEBI:16567"/>
        <label>2</label>
    </ligand>
</feature>
<feature type="binding site" evidence="1">
    <location>
        <position position="230"/>
    </location>
    <ligand>
        <name>Mg(2+)</name>
        <dbReference type="ChEBI" id="CHEBI:18420"/>
        <label>2</label>
    </ligand>
</feature>
<feature type="binding site" evidence="1">
    <location>
        <position position="231"/>
    </location>
    <ligand>
        <name>Mg(2+)</name>
        <dbReference type="ChEBI" id="CHEBI:18420"/>
        <label>1</label>
    </ligand>
</feature>
<feature type="binding site" evidence="1">
    <location>
        <position position="231"/>
    </location>
    <ligand>
        <name>Mg(2+)</name>
        <dbReference type="ChEBI" id="CHEBI:18420"/>
        <label>2</label>
    </ligand>
</feature>
<accession>A1W2Z7</accession>
<gene>
    <name evidence="1" type="primary">trpD</name>
    <name type="ordered locus">Ajs_0369</name>
</gene>
<dbReference type="EC" id="2.4.2.18" evidence="1"/>
<dbReference type="EMBL" id="CP000539">
    <property type="protein sequence ID" value="ABM40622.1"/>
    <property type="molecule type" value="Genomic_DNA"/>
</dbReference>
<dbReference type="SMR" id="A1W2Z7"/>
<dbReference type="STRING" id="232721.Ajs_0369"/>
<dbReference type="KEGG" id="ajs:Ajs_0369"/>
<dbReference type="eggNOG" id="COG0547">
    <property type="taxonomic scope" value="Bacteria"/>
</dbReference>
<dbReference type="HOGENOM" id="CLU_034315_2_1_4"/>
<dbReference type="UniPathway" id="UPA00035">
    <property type="reaction ID" value="UER00041"/>
</dbReference>
<dbReference type="Proteomes" id="UP000000645">
    <property type="component" value="Chromosome"/>
</dbReference>
<dbReference type="GO" id="GO:0005829">
    <property type="term" value="C:cytosol"/>
    <property type="evidence" value="ECO:0007669"/>
    <property type="project" value="TreeGrafter"/>
</dbReference>
<dbReference type="GO" id="GO:0004048">
    <property type="term" value="F:anthranilate phosphoribosyltransferase activity"/>
    <property type="evidence" value="ECO:0007669"/>
    <property type="project" value="UniProtKB-UniRule"/>
</dbReference>
<dbReference type="GO" id="GO:0000287">
    <property type="term" value="F:magnesium ion binding"/>
    <property type="evidence" value="ECO:0007669"/>
    <property type="project" value="UniProtKB-UniRule"/>
</dbReference>
<dbReference type="GO" id="GO:0000162">
    <property type="term" value="P:L-tryptophan biosynthetic process"/>
    <property type="evidence" value="ECO:0007669"/>
    <property type="project" value="UniProtKB-UniRule"/>
</dbReference>
<dbReference type="FunFam" id="1.20.970.10:FF:000006">
    <property type="entry name" value="Anthranilate phosphoribosyltransferase"/>
    <property type="match status" value="1"/>
</dbReference>
<dbReference type="FunFam" id="3.40.1030.10:FF:000002">
    <property type="entry name" value="Anthranilate phosphoribosyltransferase"/>
    <property type="match status" value="1"/>
</dbReference>
<dbReference type="Gene3D" id="3.40.1030.10">
    <property type="entry name" value="Nucleoside phosphorylase/phosphoribosyltransferase catalytic domain"/>
    <property type="match status" value="1"/>
</dbReference>
<dbReference type="Gene3D" id="1.20.970.10">
    <property type="entry name" value="Transferase, Pyrimidine Nucleoside Phosphorylase, Chain C"/>
    <property type="match status" value="1"/>
</dbReference>
<dbReference type="HAMAP" id="MF_00211">
    <property type="entry name" value="TrpD"/>
    <property type="match status" value="1"/>
</dbReference>
<dbReference type="InterPro" id="IPR005940">
    <property type="entry name" value="Anthranilate_Pribosyl_Tfrase"/>
</dbReference>
<dbReference type="InterPro" id="IPR000312">
    <property type="entry name" value="Glycosyl_Trfase_fam3"/>
</dbReference>
<dbReference type="InterPro" id="IPR017459">
    <property type="entry name" value="Glycosyl_Trfase_fam3_N_dom"/>
</dbReference>
<dbReference type="InterPro" id="IPR036320">
    <property type="entry name" value="Glycosyl_Trfase_fam3_N_dom_sf"/>
</dbReference>
<dbReference type="InterPro" id="IPR035902">
    <property type="entry name" value="Nuc_phospho_transferase"/>
</dbReference>
<dbReference type="NCBIfam" id="TIGR01245">
    <property type="entry name" value="trpD"/>
    <property type="match status" value="1"/>
</dbReference>
<dbReference type="PANTHER" id="PTHR43285">
    <property type="entry name" value="ANTHRANILATE PHOSPHORIBOSYLTRANSFERASE"/>
    <property type="match status" value="1"/>
</dbReference>
<dbReference type="PANTHER" id="PTHR43285:SF2">
    <property type="entry name" value="ANTHRANILATE PHOSPHORIBOSYLTRANSFERASE"/>
    <property type="match status" value="1"/>
</dbReference>
<dbReference type="Pfam" id="PF02885">
    <property type="entry name" value="Glycos_trans_3N"/>
    <property type="match status" value="1"/>
</dbReference>
<dbReference type="Pfam" id="PF00591">
    <property type="entry name" value="Glycos_transf_3"/>
    <property type="match status" value="1"/>
</dbReference>
<dbReference type="SUPFAM" id="SSF52418">
    <property type="entry name" value="Nucleoside phosphorylase/phosphoribosyltransferase catalytic domain"/>
    <property type="match status" value="1"/>
</dbReference>
<dbReference type="SUPFAM" id="SSF47648">
    <property type="entry name" value="Nucleoside phosphorylase/phosphoribosyltransferase N-terminal domain"/>
    <property type="match status" value="1"/>
</dbReference>